<comment type="function">
    <text evidence="1">Virulence factor that affects the acute immune response to infection. Bcl-2-like protein which, through its interaction with the DEAD box RNA helicase DDX3X/DDX3, prevents TBK1/IKKepsilon-mediated IRF3 activation. Contributes to virulence by binding to the host TRAF6 and IRAK2 and preventing host NF-kappa-B activation.</text>
</comment>
<comment type="subunit">
    <text evidence="1">Interacts with DDX3; this interaction inhibits DDX3 and suppresses DDX3-mediated IFN-beta promoter induction. Interacts with TRAF6 and IRAK2; these interactions suppress TLR-dependent NF-KappaB activation.</text>
</comment>
<comment type="subcellular location">
    <subcellularLocation>
        <location evidence="1">Host cytoplasm</location>
    </subcellularLocation>
</comment>
<comment type="induction">
    <text evidence="1">Expressed in the early phase of the viral replicative cycle.</text>
</comment>
<comment type="similarity">
    <text evidence="2">Belongs to the orthopoxvirus OPG044 family.</text>
</comment>
<name>PG044_VACCA</name>
<organismHost>
    <name type="scientific">Homo sapiens</name>
    <name type="common">Human</name>
    <dbReference type="NCBI Taxonomy" id="9606"/>
</organismHost>
<feature type="chain" id="PRO_0000099607" description="Protein K7">
    <location>
        <begin position="1"/>
        <end position="149"/>
    </location>
</feature>
<dbReference type="EMBL" id="U94848">
    <property type="protein sequence ID" value="AAB96484.1"/>
    <property type="molecule type" value="Genomic_DNA"/>
</dbReference>
<dbReference type="EMBL" id="AY603355">
    <property type="protein sequence ID" value="AAT10426.1"/>
    <property type="molecule type" value="Genomic_DNA"/>
</dbReference>
<dbReference type="BMRB" id="Q76ZX2"/>
<dbReference type="SMR" id="Q76ZX2"/>
<dbReference type="DNASU" id="3707496"/>
<dbReference type="KEGG" id="vg:3707496"/>
<dbReference type="Proteomes" id="UP000159908">
    <property type="component" value="Segment"/>
</dbReference>
<dbReference type="Proteomes" id="UP000172909">
    <property type="component" value="Segment"/>
</dbReference>
<dbReference type="GO" id="GO:0030430">
    <property type="term" value="C:host cell cytoplasm"/>
    <property type="evidence" value="ECO:0007669"/>
    <property type="project" value="UniProtKB-SubCell"/>
</dbReference>
<dbReference type="GO" id="GO:0052170">
    <property type="term" value="P:symbiont-mediated suppression of host innate immune response"/>
    <property type="evidence" value="ECO:0007669"/>
    <property type="project" value="UniProtKB-KW"/>
</dbReference>
<dbReference type="Gene3D" id="1.10.437.20">
    <property type="entry name" value="dsDNA poxvirus"/>
    <property type="match status" value="1"/>
</dbReference>
<dbReference type="InterPro" id="IPR009174">
    <property type="entry name" value="Orthopox_K7"/>
</dbReference>
<dbReference type="InterPro" id="IPR022819">
    <property type="entry name" value="Poxvirus_Bcl-2-like"/>
</dbReference>
<dbReference type="InterPro" id="IPR043018">
    <property type="entry name" value="Poxvirus_sf"/>
</dbReference>
<dbReference type="Pfam" id="PF06227">
    <property type="entry name" value="Poxv_Bcl-2-like"/>
    <property type="match status" value="1"/>
</dbReference>
<dbReference type="PIRSF" id="PIRSF003764">
    <property type="entry name" value="VAC_K7R"/>
    <property type="match status" value="1"/>
</dbReference>
<sequence>MATKLDYEDAVFYFVDDDKICSRDSIIDLIDEYITWRNHVIVFNKDITSCGRLYKELMKFDDVAIRYYGIDKINEIVEAMSEGDHYINFTKVHDQESLFATIGICAKITEHWGYKKISESRFQSLGNITDLMTDDNINILILFLEKKLN</sequence>
<evidence type="ECO:0000250" key="1">
    <source>
        <dbReference type="UniProtKB" id="P68466"/>
    </source>
</evidence>
<evidence type="ECO:0000305" key="2"/>
<accession>Q76ZX2</accession>
<protein>
    <recommendedName>
        <fullName>Protein K7</fullName>
    </recommendedName>
</protein>
<reference key="1">
    <citation type="journal article" date="1998" name="Virology">
        <title>The complete genomic sequence of the modified vaccinia Ankara strain: comparison with other orthopoxviruses.</title>
        <authorList>
            <person name="Antoine G."/>
            <person name="Scheiflinger F."/>
            <person name="Dorner F."/>
            <person name="Falkner F.G."/>
        </authorList>
    </citation>
    <scope>NUCLEOTIDE SEQUENCE [LARGE SCALE GENOMIC DNA]</scope>
</reference>
<reference key="2">
    <citation type="submission" date="2004-04" db="EMBL/GenBank/DDBJ databases">
        <authorList>
            <person name="Esposito J.J."/>
            <person name="Frace M."/>
            <person name="Sammons S.A."/>
            <person name="Olsen-Rasmussen M.S."/>
            <person name="Osborne J."/>
            <person name="Khristova M."/>
            <person name="Wohlhueter R.M."/>
        </authorList>
    </citation>
    <scope>NUCLEOTIDE SEQUENCE [LARGE SCALE GENOMIC DNA]</scope>
    <source>
        <strain>Isolate Acambis 3000</strain>
    </source>
</reference>
<organism>
    <name type="scientific">Vaccinia virus (strain Ankara)</name>
    <name type="common">VACV</name>
    <dbReference type="NCBI Taxonomy" id="126794"/>
    <lineage>
        <taxon>Viruses</taxon>
        <taxon>Varidnaviria</taxon>
        <taxon>Bamfordvirae</taxon>
        <taxon>Nucleocytoviricota</taxon>
        <taxon>Pokkesviricetes</taxon>
        <taxon>Chitovirales</taxon>
        <taxon>Poxviridae</taxon>
        <taxon>Chordopoxvirinae</taxon>
        <taxon>Orthopoxvirus</taxon>
        <taxon>Vaccinia virus</taxon>
    </lineage>
</organism>
<gene>
    <name type="primary">OPG044</name>
    <name type="ordered locus">MVA028R</name>
    <name type="ordered locus">ACAM3000_MVA_028</name>
</gene>
<keyword id="KW-1035">Host cytoplasm</keyword>
<keyword id="KW-0945">Host-virus interaction</keyword>
<keyword id="KW-1090">Inhibition of host innate immune response by virus</keyword>
<keyword id="KW-1113">Inhibition of host RLR pathway by virus</keyword>
<keyword id="KW-0899">Viral immunoevasion</keyword>
<proteinExistence type="inferred from homology"/>